<comment type="function">
    <text evidence="1">Phosphorolytic 3'-5' exoribonuclease that plays an important role in tRNA 3'-end maturation. Removes nucleotide residues following the 3'-CCA terminus of tRNAs; can also add nucleotides to the ends of RNA molecules by using nucleoside diphosphates as substrates, but this may not be physiologically important. Probably plays a role in initiation of 16S rRNA degradation (leading to ribosome degradation) during starvation.</text>
</comment>
<comment type="catalytic activity">
    <reaction evidence="1">
        <text>tRNA(n+1) + phosphate = tRNA(n) + a ribonucleoside 5'-diphosphate</text>
        <dbReference type="Rhea" id="RHEA:10628"/>
        <dbReference type="Rhea" id="RHEA-COMP:17343"/>
        <dbReference type="Rhea" id="RHEA-COMP:17344"/>
        <dbReference type="ChEBI" id="CHEBI:43474"/>
        <dbReference type="ChEBI" id="CHEBI:57930"/>
        <dbReference type="ChEBI" id="CHEBI:173114"/>
        <dbReference type="EC" id="2.7.7.56"/>
    </reaction>
</comment>
<comment type="subunit">
    <text evidence="1">Homohexameric ring arranged as a trimer of dimers.</text>
</comment>
<comment type="similarity">
    <text evidence="1">Belongs to the RNase PH family.</text>
</comment>
<protein>
    <recommendedName>
        <fullName evidence="1">Ribonuclease PH</fullName>
        <shortName evidence="1">RNase PH</shortName>
        <ecNumber evidence="1">2.7.7.56</ecNumber>
    </recommendedName>
    <alternativeName>
        <fullName evidence="1">tRNA nucleotidyltransferase</fullName>
    </alternativeName>
</protein>
<reference key="1">
    <citation type="journal article" date="2009" name="BMC Genomics">
        <title>Pseudogene accumulation in the evolutionary histories of Salmonella enterica serovars Paratyphi A and Typhi.</title>
        <authorList>
            <person name="Holt K.E."/>
            <person name="Thomson N.R."/>
            <person name="Wain J."/>
            <person name="Langridge G.C."/>
            <person name="Hasan R."/>
            <person name="Bhutta Z.A."/>
            <person name="Quail M.A."/>
            <person name="Norbertczak H."/>
            <person name="Walker D."/>
            <person name="Simmonds M."/>
            <person name="White B."/>
            <person name="Bason N."/>
            <person name="Mungall K."/>
            <person name="Dougan G."/>
            <person name="Parkhill J."/>
        </authorList>
    </citation>
    <scope>NUCLEOTIDE SEQUENCE [LARGE SCALE GENOMIC DNA]</scope>
    <source>
        <strain>AKU_12601</strain>
    </source>
</reference>
<evidence type="ECO:0000255" key="1">
    <source>
        <dbReference type="HAMAP-Rule" id="MF_00564"/>
    </source>
</evidence>
<accession>B5BI17</accession>
<feature type="chain" id="PRO_1000129371" description="Ribonuclease PH">
    <location>
        <begin position="1"/>
        <end position="238"/>
    </location>
</feature>
<feature type="binding site" evidence="1">
    <location>
        <position position="86"/>
    </location>
    <ligand>
        <name>phosphate</name>
        <dbReference type="ChEBI" id="CHEBI:43474"/>
        <note>substrate</note>
    </ligand>
</feature>
<feature type="binding site" evidence="1">
    <location>
        <begin position="124"/>
        <end position="126"/>
    </location>
    <ligand>
        <name>phosphate</name>
        <dbReference type="ChEBI" id="CHEBI:43474"/>
        <note>substrate</note>
    </ligand>
</feature>
<organism>
    <name type="scientific">Salmonella paratyphi A (strain AKU_12601)</name>
    <dbReference type="NCBI Taxonomy" id="554290"/>
    <lineage>
        <taxon>Bacteria</taxon>
        <taxon>Pseudomonadati</taxon>
        <taxon>Pseudomonadota</taxon>
        <taxon>Gammaproteobacteria</taxon>
        <taxon>Enterobacterales</taxon>
        <taxon>Enterobacteriaceae</taxon>
        <taxon>Salmonella</taxon>
    </lineage>
</organism>
<gene>
    <name evidence="1" type="primary">rph</name>
    <name type="ordered locus">SSPA3349</name>
</gene>
<dbReference type="EC" id="2.7.7.56" evidence="1"/>
<dbReference type="EMBL" id="FM200053">
    <property type="protein sequence ID" value="CAR61615.1"/>
    <property type="molecule type" value="Genomic_DNA"/>
</dbReference>
<dbReference type="RefSeq" id="WP_001247078.1">
    <property type="nucleotide sequence ID" value="NC_011147.1"/>
</dbReference>
<dbReference type="SMR" id="B5BI17"/>
<dbReference type="KEGG" id="sek:SSPA3349"/>
<dbReference type="HOGENOM" id="CLU_050858_0_0_6"/>
<dbReference type="Proteomes" id="UP000001869">
    <property type="component" value="Chromosome"/>
</dbReference>
<dbReference type="GO" id="GO:0000175">
    <property type="term" value="F:3'-5'-RNA exonuclease activity"/>
    <property type="evidence" value="ECO:0007669"/>
    <property type="project" value="UniProtKB-UniRule"/>
</dbReference>
<dbReference type="GO" id="GO:0000049">
    <property type="term" value="F:tRNA binding"/>
    <property type="evidence" value="ECO:0007669"/>
    <property type="project" value="UniProtKB-UniRule"/>
</dbReference>
<dbReference type="GO" id="GO:0009022">
    <property type="term" value="F:tRNA nucleotidyltransferase activity"/>
    <property type="evidence" value="ECO:0007669"/>
    <property type="project" value="UniProtKB-UniRule"/>
</dbReference>
<dbReference type="GO" id="GO:0016075">
    <property type="term" value="P:rRNA catabolic process"/>
    <property type="evidence" value="ECO:0007669"/>
    <property type="project" value="UniProtKB-UniRule"/>
</dbReference>
<dbReference type="GO" id="GO:0006364">
    <property type="term" value="P:rRNA processing"/>
    <property type="evidence" value="ECO:0007669"/>
    <property type="project" value="UniProtKB-KW"/>
</dbReference>
<dbReference type="GO" id="GO:0008033">
    <property type="term" value="P:tRNA processing"/>
    <property type="evidence" value="ECO:0007669"/>
    <property type="project" value="UniProtKB-UniRule"/>
</dbReference>
<dbReference type="CDD" id="cd11362">
    <property type="entry name" value="RNase_PH_bact"/>
    <property type="match status" value="1"/>
</dbReference>
<dbReference type="FunFam" id="3.30.230.70:FF:000003">
    <property type="entry name" value="Ribonuclease PH"/>
    <property type="match status" value="1"/>
</dbReference>
<dbReference type="Gene3D" id="3.30.230.70">
    <property type="entry name" value="GHMP Kinase, N-terminal domain"/>
    <property type="match status" value="1"/>
</dbReference>
<dbReference type="HAMAP" id="MF_00564">
    <property type="entry name" value="RNase_PH"/>
    <property type="match status" value="1"/>
</dbReference>
<dbReference type="InterPro" id="IPR001247">
    <property type="entry name" value="ExoRNase_PH_dom1"/>
</dbReference>
<dbReference type="InterPro" id="IPR015847">
    <property type="entry name" value="ExoRNase_PH_dom2"/>
</dbReference>
<dbReference type="InterPro" id="IPR036345">
    <property type="entry name" value="ExoRNase_PH_dom2_sf"/>
</dbReference>
<dbReference type="InterPro" id="IPR027408">
    <property type="entry name" value="PNPase/RNase_PH_dom_sf"/>
</dbReference>
<dbReference type="InterPro" id="IPR020568">
    <property type="entry name" value="Ribosomal_Su5_D2-typ_SF"/>
</dbReference>
<dbReference type="InterPro" id="IPR050080">
    <property type="entry name" value="RNase_PH"/>
</dbReference>
<dbReference type="InterPro" id="IPR002381">
    <property type="entry name" value="RNase_PH_bac-type"/>
</dbReference>
<dbReference type="InterPro" id="IPR018336">
    <property type="entry name" value="RNase_PH_CS"/>
</dbReference>
<dbReference type="NCBIfam" id="TIGR01966">
    <property type="entry name" value="RNasePH"/>
    <property type="match status" value="1"/>
</dbReference>
<dbReference type="PANTHER" id="PTHR11953">
    <property type="entry name" value="EXOSOME COMPLEX COMPONENT"/>
    <property type="match status" value="1"/>
</dbReference>
<dbReference type="PANTHER" id="PTHR11953:SF0">
    <property type="entry name" value="EXOSOME COMPLEX COMPONENT RRP41"/>
    <property type="match status" value="1"/>
</dbReference>
<dbReference type="Pfam" id="PF01138">
    <property type="entry name" value="RNase_PH"/>
    <property type="match status" value="1"/>
</dbReference>
<dbReference type="Pfam" id="PF03725">
    <property type="entry name" value="RNase_PH_C"/>
    <property type="match status" value="1"/>
</dbReference>
<dbReference type="SUPFAM" id="SSF55666">
    <property type="entry name" value="Ribonuclease PH domain 2-like"/>
    <property type="match status" value="1"/>
</dbReference>
<dbReference type="SUPFAM" id="SSF54211">
    <property type="entry name" value="Ribosomal protein S5 domain 2-like"/>
    <property type="match status" value="1"/>
</dbReference>
<dbReference type="PROSITE" id="PS01277">
    <property type="entry name" value="RIBONUCLEASE_PH"/>
    <property type="match status" value="1"/>
</dbReference>
<proteinExistence type="inferred from homology"/>
<sequence>MRPAGRSANQVRPVTLTRNYTKHAEGSVLVEFGDTKVLCTASIEEGVPRFLKGQGQGWITAEYGMLPRATHTRNAREAAKGKQGGRTMEIQRLIARALRAAVDLKTLGEFTITLDCDVIQADGGTRTASITGACVALADALNKLVANGKLKTNPMKGMVAAVSVGIVNGEAICDLEYVEDSAAETDMNVVMTEDGRIIEVQGTAEGEPFSHEELLTLLALARGGIESIVATQKAALEN</sequence>
<name>RNPH_SALPK</name>
<keyword id="KW-0548">Nucleotidyltransferase</keyword>
<keyword id="KW-0694">RNA-binding</keyword>
<keyword id="KW-0698">rRNA processing</keyword>
<keyword id="KW-0808">Transferase</keyword>
<keyword id="KW-0819">tRNA processing</keyword>
<keyword id="KW-0820">tRNA-binding</keyword>